<sequence>GCITTKELGTVMRSLGQNPTEAELQDMINEVDADGNGTIDFPEFLNLMARKIKDTDFEEELKEAFRVFDKDRNGFISAAELPHVMTNLGEKLTDEEVDEIIREADVDCDGQINYDEFVKVMMAK</sequence>
<proteinExistence type="uncertain"/>
<reference key="1">
    <citation type="journal article" date="1995" name="Plant Mol. Biol.">
        <title>Calmodulin gene family in potato: developmental and touch-induced expression of the mRNA encoding a novel isoform.</title>
        <authorList>
            <person name="Takezawa D."/>
            <person name="Liu Z.H."/>
            <person name="An G."/>
            <person name="Poovaiah B.W."/>
        </authorList>
    </citation>
    <scope>NUCLEOTIDE SEQUENCE [GENOMIC DNA]</scope>
    <source>
        <strain>cv. Russet Burbank-0</strain>
    </source>
</reference>
<feature type="chain" id="PRO_0000198304" description="Putative calmodulin-3">
    <location>
        <begin position="1" status="less than"/>
        <end position="124"/>
    </location>
</feature>
<feature type="domain" description="EF-hand 1" evidence="2">
    <location>
        <begin position="1" status="less than"/>
        <end position="18"/>
    </location>
</feature>
<feature type="domain" description="EF-hand 2" evidence="2">
    <location>
        <begin position="19"/>
        <end position="54"/>
    </location>
</feature>
<feature type="domain" description="EF-hand 3" evidence="2">
    <location>
        <begin position="56"/>
        <end position="91"/>
    </location>
</feature>
<feature type="domain" description="EF-hand 4" evidence="2">
    <location>
        <begin position="92"/>
        <end position="124"/>
    </location>
</feature>
<feature type="binding site" evidence="3">
    <location>
        <position position="2"/>
    </location>
    <ligand>
        <name>Ca(2+)</name>
        <dbReference type="ChEBI" id="CHEBI:29108"/>
        <label>1</label>
    </ligand>
</feature>
<feature type="binding site" evidence="3">
    <location>
        <position position="7"/>
    </location>
    <ligand>
        <name>Ca(2+)</name>
        <dbReference type="ChEBI" id="CHEBI:29108"/>
        <label>1</label>
    </ligand>
</feature>
<feature type="binding site" evidence="2">
    <location>
        <position position="32"/>
    </location>
    <ligand>
        <name>Ca(2+)</name>
        <dbReference type="ChEBI" id="CHEBI:29108"/>
        <label>2</label>
    </ligand>
</feature>
<feature type="binding site" evidence="2">
    <location>
        <position position="34"/>
    </location>
    <ligand>
        <name>Ca(2+)</name>
        <dbReference type="ChEBI" id="CHEBI:29108"/>
        <label>2</label>
    </ligand>
</feature>
<feature type="binding site" evidence="2">
    <location>
        <position position="36"/>
    </location>
    <ligand>
        <name>Ca(2+)</name>
        <dbReference type="ChEBI" id="CHEBI:29108"/>
        <label>2</label>
    </ligand>
</feature>
<feature type="binding site" evidence="2">
    <location>
        <position position="38"/>
    </location>
    <ligand>
        <name>Ca(2+)</name>
        <dbReference type="ChEBI" id="CHEBI:29108"/>
        <label>2</label>
    </ligand>
</feature>
<feature type="binding site" evidence="2">
    <location>
        <position position="43"/>
    </location>
    <ligand>
        <name>Ca(2+)</name>
        <dbReference type="ChEBI" id="CHEBI:29108"/>
        <label>2</label>
    </ligand>
</feature>
<feature type="binding site" evidence="2">
    <location>
        <position position="69"/>
    </location>
    <ligand>
        <name>Ca(2+)</name>
        <dbReference type="ChEBI" id="CHEBI:29108"/>
        <label>3</label>
    </ligand>
</feature>
<feature type="binding site" evidence="2">
    <location>
        <position position="71"/>
    </location>
    <ligand>
        <name>Ca(2+)</name>
        <dbReference type="ChEBI" id="CHEBI:29108"/>
        <label>3</label>
    </ligand>
</feature>
<feature type="binding site" evidence="2">
    <location>
        <position position="73"/>
    </location>
    <ligand>
        <name>Ca(2+)</name>
        <dbReference type="ChEBI" id="CHEBI:29108"/>
        <label>3</label>
    </ligand>
</feature>
<feature type="binding site" evidence="2">
    <location>
        <position position="80"/>
    </location>
    <ligand>
        <name>Ca(2+)</name>
        <dbReference type="ChEBI" id="CHEBI:29108"/>
        <label>3</label>
    </ligand>
</feature>
<feature type="binding site" evidence="2">
    <location>
        <position position="105"/>
    </location>
    <ligand>
        <name>Ca(2+)</name>
        <dbReference type="ChEBI" id="CHEBI:29108"/>
        <label>4</label>
    </ligand>
</feature>
<feature type="binding site" evidence="2">
    <location>
        <position position="107"/>
    </location>
    <ligand>
        <name>Ca(2+)</name>
        <dbReference type="ChEBI" id="CHEBI:29108"/>
        <label>4</label>
    </ligand>
</feature>
<feature type="binding site" evidence="2">
    <location>
        <position position="109"/>
    </location>
    <ligand>
        <name>Ca(2+)</name>
        <dbReference type="ChEBI" id="CHEBI:29108"/>
        <label>4</label>
    </ligand>
</feature>
<feature type="binding site" evidence="2">
    <location>
        <position position="111"/>
    </location>
    <ligand>
        <name>Ca(2+)</name>
        <dbReference type="ChEBI" id="CHEBI:29108"/>
        <label>4</label>
    </ligand>
</feature>
<feature type="binding site" evidence="2">
    <location>
        <position position="116"/>
    </location>
    <ligand>
        <name>Ca(2+)</name>
        <dbReference type="ChEBI" id="CHEBI:29108"/>
        <label>4</label>
    </ligand>
</feature>
<feature type="modified residue" description="N6,N6,N6-trimethyllysine" evidence="1">
    <location>
        <position position="91"/>
    </location>
</feature>
<feature type="non-terminal residue">
    <location>
        <position position="1"/>
    </location>
</feature>
<comment type="function">
    <text>Calmodulin mediates the control of a large number of enzymes, ion channels and other proteins by Ca(2+). Among the enzymes to be stimulated by the calmodulin-Ca(2+) complex are a number of protein kinases and phosphatases.</text>
</comment>
<comment type="tissue specificity">
    <text>Not detected in the organs tested.</text>
</comment>
<comment type="miscellaneous">
    <text>This protein may have four calcium-binding sites.</text>
</comment>
<comment type="similarity">
    <text evidence="3">Belongs to the calmodulin family.</text>
</comment>
<comment type="caution">
    <text evidence="3">Could be the product of a pseudogene.</text>
</comment>
<name>CALM3_SOLTU</name>
<organism>
    <name type="scientific">Solanum tuberosum</name>
    <name type="common">Potato</name>
    <dbReference type="NCBI Taxonomy" id="4113"/>
    <lineage>
        <taxon>Eukaryota</taxon>
        <taxon>Viridiplantae</taxon>
        <taxon>Streptophyta</taxon>
        <taxon>Embryophyta</taxon>
        <taxon>Tracheophyta</taxon>
        <taxon>Spermatophyta</taxon>
        <taxon>Magnoliopsida</taxon>
        <taxon>eudicotyledons</taxon>
        <taxon>Gunneridae</taxon>
        <taxon>Pentapetalae</taxon>
        <taxon>asterids</taxon>
        <taxon>lamiids</taxon>
        <taxon>Solanales</taxon>
        <taxon>Solanaceae</taxon>
        <taxon>Solanoideae</taxon>
        <taxon>Solaneae</taxon>
        <taxon>Solanum</taxon>
    </lineage>
</organism>
<evidence type="ECO:0000250" key="1"/>
<evidence type="ECO:0000255" key="2">
    <source>
        <dbReference type="PROSITE-ProRule" id="PRU00448"/>
    </source>
</evidence>
<evidence type="ECO:0000305" key="3"/>
<keyword id="KW-0106">Calcium</keyword>
<keyword id="KW-0479">Metal-binding</keyword>
<keyword id="KW-0488">Methylation</keyword>
<keyword id="KW-1185">Reference proteome</keyword>
<keyword id="KW-0677">Repeat</keyword>
<protein>
    <recommendedName>
        <fullName>Putative calmodulin-3</fullName>
        <shortName>CaM-3</shortName>
    </recommendedName>
</protein>
<gene>
    <name type="primary">PCM3</name>
</gene>
<dbReference type="EMBL" id="U20292">
    <property type="protein sequence ID" value="AAA85153.1"/>
    <property type="molecule type" value="Genomic_DNA"/>
</dbReference>
<dbReference type="PIR" id="S60235">
    <property type="entry name" value="S60235"/>
</dbReference>
<dbReference type="SMR" id="Q41420"/>
<dbReference type="STRING" id="4113.Q41420"/>
<dbReference type="PaxDb" id="4113-PGSC0003DMT400097662"/>
<dbReference type="InParanoid" id="Q41420"/>
<dbReference type="Proteomes" id="UP000011115">
    <property type="component" value="Unassembled WGS sequence"/>
</dbReference>
<dbReference type="ExpressionAtlas" id="Q41420">
    <property type="expression patterns" value="baseline"/>
</dbReference>
<dbReference type="GO" id="GO:0005737">
    <property type="term" value="C:cytoplasm"/>
    <property type="evidence" value="ECO:0000318"/>
    <property type="project" value="GO_Central"/>
</dbReference>
<dbReference type="GO" id="GO:0005509">
    <property type="term" value="F:calcium ion binding"/>
    <property type="evidence" value="ECO:0000318"/>
    <property type="project" value="GO_Central"/>
</dbReference>
<dbReference type="GO" id="GO:0030234">
    <property type="term" value="F:enzyme regulator activity"/>
    <property type="evidence" value="ECO:0000318"/>
    <property type="project" value="GO_Central"/>
</dbReference>
<dbReference type="CDD" id="cd00051">
    <property type="entry name" value="EFh"/>
    <property type="match status" value="2"/>
</dbReference>
<dbReference type="FunFam" id="1.10.238.10:FF:000034">
    <property type="entry name" value="Calmodulin"/>
    <property type="match status" value="1"/>
</dbReference>
<dbReference type="FunFam" id="1.10.238.10:FF:000100">
    <property type="entry name" value="Calmodulin 1"/>
    <property type="match status" value="1"/>
</dbReference>
<dbReference type="Gene3D" id="1.10.238.10">
    <property type="entry name" value="EF-hand"/>
    <property type="match status" value="3"/>
</dbReference>
<dbReference type="InterPro" id="IPR050230">
    <property type="entry name" value="CALM/Myosin/TropC-like"/>
</dbReference>
<dbReference type="InterPro" id="IPR011992">
    <property type="entry name" value="EF-hand-dom_pair"/>
</dbReference>
<dbReference type="InterPro" id="IPR018247">
    <property type="entry name" value="EF_Hand_1_Ca_BS"/>
</dbReference>
<dbReference type="InterPro" id="IPR002048">
    <property type="entry name" value="EF_hand_dom"/>
</dbReference>
<dbReference type="PANTHER" id="PTHR23048:SF53">
    <property type="entry name" value="CALMODULIN"/>
    <property type="match status" value="1"/>
</dbReference>
<dbReference type="PANTHER" id="PTHR23048">
    <property type="entry name" value="MYOSIN LIGHT CHAIN 1, 3"/>
    <property type="match status" value="1"/>
</dbReference>
<dbReference type="Pfam" id="PF13499">
    <property type="entry name" value="EF-hand_7"/>
    <property type="match status" value="1"/>
</dbReference>
<dbReference type="Pfam" id="PF13833">
    <property type="entry name" value="EF-hand_8"/>
    <property type="match status" value="1"/>
</dbReference>
<dbReference type="SMART" id="SM00054">
    <property type="entry name" value="EFh"/>
    <property type="match status" value="3"/>
</dbReference>
<dbReference type="SUPFAM" id="SSF47473">
    <property type="entry name" value="EF-hand"/>
    <property type="match status" value="1"/>
</dbReference>
<dbReference type="PROSITE" id="PS00018">
    <property type="entry name" value="EF_HAND_1"/>
    <property type="match status" value="3"/>
</dbReference>
<dbReference type="PROSITE" id="PS50222">
    <property type="entry name" value="EF_HAND_2"/>
    <property type="match status" value="4"/>
</dbReference>
<accession>Q41420</accession>